<organism>
    <name type="scientific">Cutibacterium acnes (strain DSM 16379 / KPA171202)</name>
    <name type="common">Propionibacterium acnes</name>
    <dbReference type="NCBI Taxonomy" id="267747"/>
    <lineage>
        <taxon>Bacteria</taxon>
        <taxon>Bacillati</taxon>
        <taxon>Actinomycetota</taxon>
        <taxon>Actinomycetes</taxon>
        <taxon>Propionibacteriales</taxon>
        <taxon>Propionibacteriaceae</taxon>
        <taxon>Cutibacterium</taxon>
    </lineage>
</organism>
<dbReference type="EMBL" id="AE017283">
    <property type="protein sequence ID" value="AAT83931.1"/>
    <property type="molecule type" value="Genomic_DNA"/>
</dbReference>
<dbReference type="RefSeq" id="WP_002514172.1">
    <property type="nucleotide sequence ID" value="NZ_CP025935.1"/>
</dbReference>
<dbReference type="SMR" id="Q6A5N2"/>
<dbReference type="EnsemblBacteria" id="AAT83931">
    <property type="protein sequence ID" value="AAT83931"/>
    <property type="gene ID" value="PPA2227"/>
</dbReference>
<dbReference type="GeneID" id="92858165"/>
<dbReference type="KEGG" id="pac:PPA2227"/>
<dbReference type="eggNOG" id="COG0359">
    <property type="taxonomic scope" value="Bacteria"/>
</dbReference>
<dbReference type="HOGENOM" id="CLU_078938_5_1_11"/>
<dbReference type="Proteomes" id="UP000000603">
    <property type="component" value="Chromosome"/>
</dbReference>
<dbReference type="GO" id="GO:1990904">
    <property type="term" value="C:ribonucleoprotein complex"/>
    <property type="evidence" value="ECO:0007669"/>
    <property type="project" value="UniProtKB-KW"/>
</dbReference>
<dbReference type="GO" id="GO:0005840">
    <property type="term" value="C:ribosome"/>
    <property type="evidence" value="ECO:0007669"/>
    <property type="project" value="UniProtKB-KW"/>
</dbReference>
<dbReference type="GO" id="GO:0019843">
    <property type="term" value="F:rRNA binding"/>
    <property type="evidence" value="ECO:0007669"/>
    <property type="project" value="UniProtKB-UniRule"/>
</dbReference>
<dbReference type="GO" id="GO:0003735">
    <property type="term" value="F:structural constituent of ribosome"/>
    <property type="evidence" value="ECO:0007669"/>
    <property type="project" value="InterPro"/>
</dbReference>
<dbReference type="GO" id="GO:0006412">
    <property type="term" value="P:translation"/>
    <property type="evidence" value="ECO:0007669"/>
    <property type="project" value="UniProtKB-UniRule"/>
</dbReference>
<dbReference type="FunFam" id="3.40.5.10:FF:000003">
    <property type="entry name" value="50S ribosomal protein L9"/>
    <property type="match status" value="1"/>
</dbReference>
<dbReference type="Gene3D" id="3.10.430.100">
    <property type="entry name" value="Ribosomal protein L9, C-terminal domain"/>
    <property type="match status" value="1"/>
</dbReference>
<dbReference type="Gene3D" id="3.40.5.10">
    <property type="entry name" value="Ribosomal protein L9, N-terminal domain"/>
    <property type="match status" value="1"/>
</dbReference>
<dbReference type="HAMAP" id="MF_00503">
    <property type="entry name" value="Ribosomal_bL9"/>
    <property type="match status" value="1"/>
</dbReference>
<dbReference type="InterPro" id="IPR000244">
    <property type="entry name" value="Ribosomal_bL9"/>
</dbReference>
<dbReference type="InterPro" id="IPR009027">
    <property type="entry name" value="Ribosomal_bL9/RNase_H1_N"/>
</dbReference>
<dbReference type="InterPro" id="IPR020594">
    <property type="entry name" value="Ribosomal_bL9_bac/chp"/>
</dbReference>
<dbReference type="InterPro" id="IPR020069">
    <property type="entry name" value="Ribosomal_bL9_C"/>
</dbReference>
<dbReference type="InterPro" id="IPR036791">
    <property type="entry name" value="Ribosomal_bL9_C_sf"/>
</dbReference>
<dbReference type="InterPro" id="IPR020070">
    <property type="entry name" value="Ribosomal_bL9_N"/>
</dbReference>
<dbReference type="InterPro" id="IPR036935">
    <property type="entry name" value="Ribosomal_bL9_N_sf"/>
</dbReference>
<dbReference type="NCBIfam" id="TIGR00158">
    <property type="entry name" value="L9"/>
    <property type="match status" value="1"/>
</dbReference>
<dbReference type="PANTHER" id="PTHR21368">
    <property type="entry name" value="50S RIBOSOMAL PROTEIN L9"/>
    <property type="match status" value="1"/>
</dbReference>
<dbReference type="Pfam" id="PF03948">
    <property type="entry name" value="Ribosomal_L9_C"/>
    <property type="match status" value="1"/>
</dbReference>
<dbReference type="Pfam" id="PF01281">
    <property type="entry name" value="Ribosomal_L9_N"/>
    <property type="match status" value="1"/>
</dbReference>
<dbReference type="SUPFAM" id="SSF55658">
    <property type="entry name" value="L9 N-domain-like"/>
    <property type="match status" value="1"/>
</dbReference>
<dbReference type="SUPFAM" id="SSF55653">
    <property type="entry name" value="Ribosomal protein L9 C-domain"/>
    <property type="match status" value="1"/>
</dbReference>
<dbReference type="PROSITE" id="PS00651">
    <property type="entry name" value="RIBOSOMAL_L9"/>
    <property type="match status" value="1"/>
</dbReference>
<sequence length="149" mass="16118">MKLILTAPVAKLGVPGDIVEVKDGYGRNYLLPQNYAIKWTRGAEAQIKDITRARKAKEIKSKEEAEQIRSQLEHLVVQVTVQVGENGRLFGAVTPGDIALAVRKAGGPALEKRSIEITKPIKTIGKHTVGVKLHDAIKGHVTVETVPAA</sequence>
<reference key="1">
    <citation type="journal article" date="2004" name="Science">
        <title>The complete genome sequence of Propionibacterium acnes, a commensal of human skin.</title>
        <authorList>
            <person name="Brueggemann H."/>
            <person name="Henne A."/>
            <person name="Hoster F."/>
            <person name="Liesegang H."/>
            <person name="Wiezer A."/>
            <person name="Strittmatter A."/>
            <person name="Hujer S."/>
            <person name="Duerre P."/>
            <person name="Gottschalk G."/>
        </authorList>
    </citation>
    <scope>NUCLEOTIDE SEQUENCE [LARGE SCALE GENOMIC DNA]</scope>
    <source>
        <strain>DSM 16379 / KPA171202</strain>
    </source>
</reference>
<feature type="chain" id="PRO_0000236569" description="Large ribosomal subunit protein bL9">
    <location>
        <begin position="1"/>
        <end position="149"/>
    </location>
</feature>
<name>RL9_CUTAK</name>
<proteinExistence type="inferred from homology"/>
<comment type="function">
    <text evidence="1">Binds to the 23S rRNA.</text>
</comment>
<comment type="similarity">
    <text evidence="1">Belongs to the bacterial ribosomal protein bL9 family.</text>
</comment>
<protein>
    <recommendedName>
        <fullName evidence="1">Large ribosomal subunit protein bL9</fullName>
    </recommendedName>
    <alternativeName>
        <fullName evidence="2">50S ribosomal protein L9</fullName>
    </alternativeName>
</protein>
<evidence type="ECO:0000255" key="1">
    <source>
        <dbReference type="HAMAP-Rule" id="MF_00503"/>
    </source>
</evidence>
<evidence type="ECO:0000305" key="2"/>
<accession>Q6A5N2</accession>
<gene>
    <name evidence="1" type="primary">rplI</name>
    <name type="ordered locus">PPA2227</name>
</gene>
<keyword id="KW-0687">Ribonucleoprotein</keyword>
<keyword id="KW-0689">Ribosomal protein</keyword>
<keyword id="KW-0694">RNA-binding</keyword>
<keyword id="KW-0699">rRNA-binding</keyword>